<reference key="1">
    <citation type="submission" date="2002-07" db="EMBL/GenBank/DDBJ databases">
        <title>Characterization of fatty acid binding protein in Clonorchis sinensis.</title>
        <authorList>
            <person name="Lee J.-S."/>
            <person name="Yong T.-S."/>
        </authorList>
    </citation>
    <scope>NUCLEOTIDE SEQUENCE [MRNA]</scope>
</reference>
<protein>
    <recommendedName>
        <fullName>Fatty acid-binding protein</fullName>
    </recommendedName>
</protein>
<comment type="similarity">
    <text evidence="1">Belongs to the calycin superfamily. Fatty-acid binding protein (FABP) family.</text>
</comment>
<sequence>MSAFIGSWKLCESQNFDEFLRELGVNFFIRKAASTSKPTITFDKFGDNGLKMKTETILKTTEQSFTFGEEFDETTIDGRQVKSTVTRDSDTQLTQVQKHDDGNTVIVRKIEGDMMVTTATFKNITSVRKYQRH</sequence>
<name>FABP_CLOSI</name>
<organism>
    <name type="scientific">Clonorchis sinensis</name>
    <name type="common">Chinese liver fluke</name>
    <dbReference type="NCBI Taxonomy" id="79923"/>
    <lineage>
        <taxon>Eukaryota</taxon>
        <taxon>Metazoa</taxon>
        <taxon>Spiralia</taxon>
        <taxon>Lophotrochozoa</taxon>
        <taxon>Platyhelminthes</taxon>
        <taxon>Trematoda</taxon>
        <taxon>Digenea</taxon>
        <taxon>Opisthorchiida</taxon>
        <taxon>Opisthorchiata</taxon>
        <taxon>Opisthorchiidae</taxon>
        <taxon>Clonorchis</taxon>
    </lineage>
</organism>
<proteinExistence type="evidence at transcript level"/>
<dbReference type="EMBL" id="AF527454">
    <property type="protein sequence ID" value="AAN04089.1"/>
    <property type="molecule type" value="mRNA"/>
</dbReference>
<dbReference type="SMR" id="Q8MUC1"/>
<dbReference type="OrthoDB" id="412780at2759"/>
<dbReference type="GO" id="GO:0008289">
    <property type="term" value="F:lipid binding"/>
    <property type="evidence" value="ECO:0007669"/>
    <property type="project" value="UniProtKB-KW"/>
</dbReference>
<dbReference type="CDD" id="cd00742">
    <property type="entry name" value="FABP"/>
    <property type="match status" value="1"/>
</dbReference>
<dbReference type="FunFam" id="2.40.128.20:FF:000001">
    <property type="entry name" value="Fatty acid-binding protein, adipocyte"/>
    <property type="match status" value="1"/>
</dbReference>
<dbReference type="Gene3D" id="2.40.128.20">
    <property type="match status" value="1"/>
</dbReference>
<dbReference type="InterPro" id="IPR012674">
    <property type="entry name" value="Calycin"/>
</dbReference>
<dbReference type="InterPro" id="IPR000463">
    <property type="entry name" value="Fatty_acid-bd"/>
</dbReference>
<dbReference type="InterPro" id="IPR031259">
    <property type="entry name" value="ILBP"/>
</dbReference>
<dbReference type="InterPro" id="IPR000566">
    <property type="entry name" value="Lipocln_cytosolic_FA-bd_dom"/>
</dbReference>
<dbReference type="PANTHER" id="PTHR11955">
    <property type="entry name" value="FATTY ACID BINDING PROTEIN"/>
    <property type="match status" value="1"/>
</dbReference>
<dbReference type="Pfam" id="PF00061">
    <property type="entry name" value="Lipocalin"/>
    <property type="match status" value="1"/>
</dbReference>
<dbReference type="PRINTS" id="PR00178">
    <property type="entry name" value="FATTYACIDBP"/>
</dbReference>
<dbReference type="SUPFAM" id="SSF50814">
    <property type="entry name" value="Lipocalins"/>
    <property type="match status" value="1"/>
</dbReference>
<dbReference type="PROSITE" id="PS00214">
    <property type="entry name" value="FABP"/>
    <property type="match status" value="1"/>
</dbReference>
<keyword id="KW-0446">Lipid-binding</keyword>
<keyword id="KW-0813">Transport</keyword>
<accession>Q8MUC1</accession>
<evidence type="ECO:0000305" key="1"/>
<feature type="chain" id="PRO_0000067350" description="Fatty acid-binding protein">
    <location>
        <begin position="1"/>
        <end position="133"/>
    </location>
</feature>